<dbReference type="EC" id="3.5.4.19" evidence="1"/>
<dbReference type="EMBL" id="CP001050">
    <property type="protein sequence ID" value="ACF29035.1"/>
    <property type="molecule type" value="Genomic_DNA"/>
</dbReference>
<dbReference type="RefSeq" id="WP_003687532.1">
    <property type="nucleotide sequence ID" value="NC_011035.1"/>
</dbReference>
<dbReference type="SMR" id="B4RJN2"/>
<dbReference type="GeneID" id="66752541"/>
<dbReference type="KEGG" id="ngk:NGK_0342"/>
<dbReference type="HOGENOM" id="CLU_048577_5_0_4"/>
<dbReference type="UniPathway" id="UPA00031">
    <property type="reaction ID" value="UER00008"/>
</dbReference>
<dbReference type="Proteomes" id="UP000002564">
    <property type="component" value="Chromosome"/>
</dbReference>
<dbReference type="GO" id="GO:0005737">
    <property type="term" value="C:cytoplasm"/>
    <property type="evidence" value="ECO:0007669"/>
    <property type="project" value="UniProtKB-SubCell"/>
</dbReference>
<dbReference type="GO" id="GO:0000287">
    <property type="term" value="F:magnesium ion binding"/>
    <property type="evidence" value="ECO:0007669"/>
    <property type="project" value="UniProtKB-UniRule"/>
</dbReference>
<dbReference type="GO" id="GO:0004635">
    <property type="term" value="F:phosphoribosyl-AMP cyclohydrolase activity"/>
    <property type="evidence" value="ECO:0007669"/>
    <property type="project" value="UniProtKB-UniRule"/>
</dbReference>
<dbReference type="GO" id="GO:0008270">
    <property type="term" value="F:zinc ion binding"/>
    <property type="evidence" value="ECO:0007669"/>
    <property type="project" value="UniProtKB-UniRule"/>
</dbReference>
<dbReference type="GO" id="GO:0000105">
    <property type="term" value="P:L-histidine biosynthetic process"/>
    <property type="evidence" value="ECO:0007669"/>
    <property type="project" value="UniProtKB-UniRule"/>
</dbReference>
<dbReference type="FunFam" id="3.10.20.810:FF:000001">
    <property type="entry name" value="Histidine biosynthesis bifunctional protein HisIE"/>
    <property type="match status" value="1"/>
</dbReference>
<dbReference type="Gene3D" id="3.10.20.810">
    <property type="entry name" value="Phosphoribosyl-AMP cyclohydrolase"/>
    <property type="match status" value="1"/>
</dbReference>
<dbReference type="HAMAP" id="MF_01021">
    <property type="entry name" value="HisI"/>
    <property type="match status" value="1"/>
</dbReference>
<dbReference type="InterPro" id="IPR026660">
    <property type="entry name" value="PRA-CH"/>
</dbReference>
<dbReference type="InterPro" id="IPR002496">
    <property type="entry name" value="PRib_AMP_CycHydrolase_dom"/>
</dbReference>
<dbReference type="InterPro" id="IPR038019">
    <property type="entry name" value="PRib_AMP_CycHydrolase_sf"/>
</dbReference>
<dbReference type="NCBIfam" id="NF000768">
    <property type="entry name" value="PRK00051.1"/>
    <property type="match status" value="1"/>
</dbReference>
<dbReference type="PANTHER" id="PTHR42945">
    <property type="entry name" value="HISTIDINE BIOSYNTHESIS BIFUNCTIONAL PROTEIN"/>
    <property type="match status" value="1"/>
</dbReference>
<dbReference type="PANTHER" id="PTHR42945:SF1">
    <property type="entry name" value="HISTIDINE BIOSYNTHESIS BIFUNCTIONAL PROTEIN HIS7"/>
    <property type="match status" value="1"/>
</dbReference>
<dbReference type="Pfam" id="PF01502">
    <property type="entry name" value="PRA-CH"/>
    <property type="match status" value="1"/>
</dbReference>
<dbReference type="SUPFAM" id="SSF141734">
    <property type="entry name" value="HisI-like"/>
    <property type="match status" value="1"/>
</dbReference>
<accession>B4RJN2</accession>
<sequence length="131" mass="14818">MDKNLLEAVKFDEKGLVCAIAQDAETKRVLMVAWMNAEALQKTVETGFAHYYSRSRQKQWMKGEESGHTQKVRELRLDCDGDTIVMLIAQNGGIACHTGRESCFYKKWNGGAWETADAVLKDEKEIYGSTH</sequence>
<name>HIS3_NEIG2</name>
<keyword id="KW-0028">Amino-acid biosynthesis</keyword>
<keyword id="KW-0963">Cytoplasm</keyword>
<keyword id="KW-0368">Histidine biosynthesis</keyword>
<keyword id="KW-0378">Hydrolase</keyword>
<keyword id="KW-0460">Magnesium</keyword>
<keyword id="KW-0479">Metal-binding</keyword>
<keyword id="KW-0862">Zinc</keyword>
<proteinExistence type="inferred from homology"/>
<reference key="1">
    <citation type="journal article" date="2008" name="J. Bacteriol.">
        <title>Complete genome sequence of Neisseria gonorrhoeae NCCP11945.</title>
        <authorList>
            <person name="Chung G.T."/>
            <person name="Yoo J.S."/>
            <person name="Oh H.B."/>
            <person name="Lee Y.S."/>
            <person name="Cha S.H."/>
            <person name="Kim S.J."/>
            <person name="Yoo C.K."/>
        </authorList>
    </citation>
    <scope>NUCLEOTIDE SEQUENCE [LARGE SCALE GENOMIC DNA]</scope>
    <source>
        <strain>NCCP11945</strain>
    </source>
</reference>
<comment type="function">
    <text evidence="1">Catalyzes the hydrolysis of the adenine ring of phosphoribosyl-AMP.</text>
</comment>
<comment type="catalytic activity">
    <reaction evidence="1">
        <text>1-(5-phospho-beta-D-ribosyl)-5'-AMP + H2O = 1-(5-phospho-beta-D-ribosyl)-5-[(5-phospho-beta-D-ribosylamino)methylideneamino]imidazole-4-carboxamide</text>
        <dbReference type="Rhea" id="RHEA:20049"/>
        <dbReference type="ChEBI" id="CHEBI:15377"/>
        <dbReference type="ChEBI" id="CHEBI:58435"/>
        <dbReference type="ChEBI" id="CHEBI:59457"/>
        <dbReference type="EC" id="3.5.4.19"/>
    </reaction>
</comment>
<comment type="cofactor">
    <cofactor evidence="1">
        <name>Mg(2+)</name>
        <dbReference type="ChEBI" id="CHEBI:18420"/>
    </cofactor>
    <text evidence="1">Binds 1 Mg(2+) ion per subunit.</text>
</comment>
<comment type="cofactor">
    <cofactor evidence="1">
        <name>Zn(2+)</name>
        <dbReference type="ChEBI" id="CHEBI:29105"/>
    </cofactor>
    <text evidence="1">Binds 1 zinc ion per subunit.</text>
</comment>
<comment type="pathway">
    <text evidence="1">Amino-acid biosynthesis; L-histidine biosynthesis; L-histidine from 5-phospho-alpha-D-ribose 1-diphosphate: step 3/9.</text>
</comment>
<comment type="subunit">
    <text evidence="1">Homodimer.</text>
</comment>
<comment type="subcellular location">
    <subcellularLocation>
        <location evidence="1">Cytoplasm</location>
    </subcellularLocation>
</comment>
<comment type="similarity">
    <text evidence="1">Belongs to the PRA-CH family.</text>
</comment>
<protein>
    <recommendedName>
        <fullName evidence="1">Phosphoribosyl-AMP cyclohydrolase</fullName>
        <shortName evidence="1">PRA-CH</shortName>
        <ecNumber evidence="1">3.5.4.19</ecNumber>
    </recommendedName>
</protein>
<feature type="chain" id="PRO_1000135356" description="Phosphoribosyl-AMP cyclohydrolase">
    <location>
        <begin position="1"/>
        <end position="131"/>
    </location>
</feature>
<feature type="binding site" evidence="1">
    <location>
        <position position="78"/>
    </location>
    <ligand>
        <name>Mg(2+)</name>
        <dbReference type="ChEBI" id="CHEBI:18420"/>
    </ligand>
</feature>
<feature type="binding site" evidence="1">
    <location>
        <position position="79"/>
    </location>
    <ligand>
        <name>Zn(2+)</name>
        <dbReference type="ChEBI" id="CHEBI:29105"/>
        <note>ligand shared between dimeric partners</note>
    </ligand>
</feature>
<feature type="binding site" evidence="1">
    <location>
        <position position="80"/>
    </location>
    <ligand>
        <name>Mg(2+)</name>
        <dbReference type="ChEBI" id="CHEBI:18420"/>
    </ligand>
</feature>
<feature type="binding site" evidence="1">
    <location>
        <position position="82"/>
    </location>
    <ligand>
        <name>Mg(2+)</name>
        <dbReference type="ChEBI" id="CHEBI:18420"/>
    </ligand>
</feature>
<feature type="binding site" evidence="1">
    <location>
        <position position="96"/>
    </location>
    <ligand>
        <name>Zn(2+)</name>
        <dbReference type="ChEBI" id="CHEBI:29105"/>
        <note>ligand shared between dimeric partners</note>
    </ligand>
</feature>
<feature type="binding site" evidence="1">
    <location>
        <position position="103"/>
    </location>
    <ligand>
        <name>Zn(2+)</name>
        <dbReference type="ChEBI" id="CHEBI:29105"/>
        <note>ligand shared between dimeric partners</note>
    </ligand>
</feature>
<evidence type="ECO:0000255" key="1">
    <source>
        <dbReference type="HAMAP-Rule" id="MF_01021"/>
    </source>
</evidence>
<gene>
    <name evidence="1" type="primary">hisI</name>
    <name type="ordered locus">NGK_0342</name>
</gene>
<organism>
    <name type="scientific">Neisseria gonorrhoeae (strain NCCP11945)</name>
    <dbReference type="NCBI Taxonomy" id="521006"/>
    <lineage>
        <taxon>Bacteria</taxon>
        <taxon>Pseudomonadati</taxon>
        <taxon>Pseudomonadota</taxon>
        <taxon>Betaproteobacteria</taxon>
        <taxon>Neisseriales</taxon>
        <taxon>Neisseriaceae</taxon>
        <taxon>Neisseria</taxon>
    </lineage>
</organism>